<feature type="chain" id="PRO_0000228524" description="Ribonuclease 3">
    <location>
        <begin position="1"/>
        <end position="241"/>
    </location>
</feature>
<feature type="domain" description="RNase III" evidence="1">
    <location>
        <begin position="16"/>
        <end position="144"/>
    </location>
</feature>
<feature type="domain" description="DRBM" evidence="1">
    <location>
        <begin position="171"/>
        <end position="240"/>
    </location>
</feature>
<feature type="active site" evidence="1">
    <location>
        <position position="61"/>
    </location>
</feature>
<feature type="active site" evidence="1">
    <location>
        <position position="133"/>
    </location>
</feature>
<feature type="binding site" evidence="1">
    <location>
        <position position="57"/>
    </location>
    <ligand>
        <name>Mg(2+)</name>
        <dbReference type="ChEBI" id="CHEBI:18420"/>
    </ligand>
</feature>
<feature type="binding site" evidence="1">
    <location>
        <position position="133"/>
    </location>
    <ligand>
        <name>Mg(2+)</name>
        <dbReference type="ChEBI" id="CHEBI:18420"/>
    </ligand>
</feature>
<gene>
    <name evidence="1" type="primary">rnc</name>
    <name type="ordered locus">DP1245</name>
</gene>
<name>RNC_DESPS</name>
<accession>Q6ANV0</accession>
<reference key="1">
    <citation type="journal article" date="2004" name="Environ. Microbiol.">
        <title>The genome of Desulfotalea psychrophila, a sulfate-reducing bacterium from permanently cold Arctic sediments.</title>
        <authorList>
            <person name="Rabus R."/>
            <person name="Ruepp A."/>
            <person name="Frickey T."/>
            <person name="Rattei T."/>
            <person name="Fartmann B."/>
            <person name="Stark M."/>
            <person name="Bauer M."/>
            <person name="Zibat A."/>
            <person name="Lombardot T."/>
            <person name="Becker I."/>
            <person name="Amann J."/>
            <person name="Gellner K."/>
            <person name="Teeling H."/>
            <person name="Leuschner W.D."/>
            <person name="Gloeckner F.-O."/>
            <person name="Lupas A.N."/>
            <person name="Amann R."/>
            <person name="Klenk H.-P."/>
        </authorList>
    </citation>
    <scope>NUCLEOTIDE SEQUENCE [LARGE SCALE GENOMIC DNA]</scope>
    <source>
        <strain>DSM 12343 / LSv54</strain>
    </source>
</reference>
<protein>
    <recommendedName>
        <fullName evidence="1">Ribonuclease 3</fullName>
        <ecNumber evidence="1">3.1.26.3</ecNumber>
    </recommendedName>
    <alternativeName>
        <fullName evidence="1">Ribonuclease III</fullName>
        <shortName evidence="1">RNase III</shortName>
    </alternativeName>
</protein>
<keyword id="KW-0963">Cytoplasm</keyword>
<keyword id="KW-0255">Endonuclease</keyword>
<keyword id="KW-0378">Hydrolase</keyword>
<keyword id="KW-0460">Magnesium</keyword>
<keyword id="KW-0479">Metal-binding</keyword>
<keyword id="KW-0507">mRNA processing</keyword>
<keyword id="KW-0540">Nuclease</keyword>
<keyword id="KW-1185">Reference proteome</keyword>
<keyword id="KW-0694">RNA-binding</keyword>
<keyword id="KW-0698">rRNA processing</keyword>
<keyword id="KW-0699">rRNA-binding</keyword>
<keyword id="KW-0819">tRNA processing</keyword>
<evidence type="ECO:0000255" key="1">
    <source>
        <dbReference type="HAMAP-Rule" id="MF_00104"/>
    </source>
</evidence>
<comment type="function">
    <text evidence="1">Digests double-stranded RNA. Involved in the processing of primary rRNA transcript to yield the immediate precursors to the large and small rRNAs (23S and 16S). Processes some mRNAs, and tRNAs when they are encoded in the rRNA operon. Processes pre-crRNA and tracrRNA of type II CRISPR loci if present in the organism.</text>
</comment>
<comment type="catalytic activity">
    <reaction evidence="1">
        <text>Endonucleolytic cleavage to 5'-phosphomonoester.</text>
        <dbReference type="EC" id="3.1.26.3"/>
    </reaction>
</comment>
<comment type="cofactor">
    <cofactor evidence="1">
        <name>Mg(2+)</name>
        <dbReference type="ChEBI" id="CHEBI:18420"/>
    </cofactor>
</comment>
<comment type="subunit">
    <text evidence="1">Homodimer.</text>
</comment>
<comment type="subcellular location">
    <subcellularLocation>
        <location evidence="1">Cytoplasm</location>
    </subcellularLocation>
</comment>
<comment type="similarity">
    <text evidence="1">Belongs to the ribonuclease III family.</text>
</comment>
<organism>
    <name type="scientific">Desulfotalea psychrophila (strain LSv54 / DSM 12343)</name>
    <dbReference type="NCBI Taxonomy" id="177439"/>
    <lineage>
        <taxon>Bacteria</taxon>
        <taxon>Pseudomonadati</taxon>
        <taxon>Thermodesulfobacteriota</taxon>
        <taxon>Desulfobulbia</taxon>
        <taxon>Desulfobulbales</taxon>
        <taxon>Desulfocapsaceae</taxon>
        <taxon>Desulfotalea</taxon>
    </lineage>
</organism>
<dbReference type="EC" id="3.1.26.3" evidence="1"/>
<dbReference type="EMBL" id="CR522870">
    <property type="protein sequence ID" value="CAG35974.1"/>
    <property type="molecule type" value="Genomic_DNA"/>
</dbReference>
<dbReference type="RefSeq" id="WP_011188486.1">
    <property type="nucleotide sequence ID" value="NC_006138.1"/>
</dbReference>
<dbReference type="SMR" id="Q6ANV0"/>
<dbReference type="STRING" id="177439.DP1245"/>
<dbReference type="KEGG" id="dps:DP1245"/>
<dbReference type="eggNOG" id="COG0571">
    <property type="taxonomic scope" value="Bacteria"/>
</dbReference>
<dbReference type="HOGENOM" id="CLU_000907_1_3_7"/>
<dbReference type="OrthoDB" id="9805026at2"/>
<dbReference type="Proteomes" id="UP000000602">
    <property type="component" value="Chromosome"/>
</dbReference>
<dbReference type="GO" id="GO:0005737">
    <property type="term" value="C:cytoplasm"/>
    <property type="evidence" value="ECO:0007669"/>
    <property type="project" value="UniProtKB-SubCell"/>
</dbReference>
<dbReference type="GO" id="GO:0003725">
    <property type="term" value="F:double-stranded RNA binding"/>
    <property type="evidence" value="ECO:0007669"/>
    <property type="project" value="TreeGrafter"/>
</dbReference>
<dbReference type="GO" id="GO:0046872">
    <property type="term" value="F:metal ion binding"/>
    <property type="evidence" value="ECO:0007669"/>
    <property type="project" value="UniProtKB-KW"/>
</dbReference>
<dbReference type="GO" id="GO:0004525">
    <property type="term" value="F:ribonuclease III activity"/>
    <property type="evidence" value="ECO:0007669"/>
    <property type="project" value="UniProtKB-UniRule"/>
</dbReference>
<dbReference type="GO" id="GO:0019843">
    <property type="term" value="F:rRNA binding"/>
    <property type="evidence" value="ECO:0007669"/>
    <property type="project" value="UniProtKB-KW"/>
</dbReference>
<dbReference type="GO" id="GO:0006397">
    <property type="term" value="P:mRNA processing"/>
    <property type="evidence" value="ECO:0007669"/>
    <property type="project" value="UniProtKB-UniRule"/>
</dbReference>
<dbReference type="GO" id="GO:0010468">
    <property type="term" value="P:regulation of gene expression"/>
    <property type="evidence" value="ECO:0007669"/>
    <property type="project" value="TreeGrafter"/>
</dbReference>
<dbReference type="GO" id="GO:0006364">
    <property type="term" value="P:rRNA processing"/>
    <property type="evidence" value="ECO:0007669"/>
    <property type="project" value="UniProtKB-UniRule"/>
</dbReference>
<dbReference type="GO" id="GO:0008033">
    <property type="term" value="P:tRNA processing"/>
    <property type="evidence" value="ECO:0007669"/>
    <property type="project" value="UniProtKB-KW"/>
</dbReference>
<dbReference type="CDD" id="cd10845">
    <property type="entry name" value="DSRM_RNAse_III_family"/>
    <property type="match status" value="1"/>
</dbReference>
<dbReference type="CDD" id="cd00593">
    <property type="entry name" value="RIBOc"/>
    <property type="match status" value="1"/>
</dbReference>
<dbReference type="FunFam" id="1.10.1520.10:FF:000001">
    <property type="entry name" value="Ribonuclease 3"/>
    <property type="match status" value="1"/>
</dbReference>
<dbReference type="FunFam" id="3.30.160.20:FF:000003">
    <property type="entry name" value="Ribonuclease 3"/>
    <property type="match status" value="1"/>
</dbReference>
<dbReference type="Gene3D" id="3.30.160.20">
    <property type="match status" value="1"/>
</dbReference>
<dbReference type="Gene3D" id="1.10.1520.10">
    <property type="entry name" value="Ribonuclease III domain"/>
    <property type="match status" value="1"/>
</dbReference>
<dbReference type="HAMAP" id="MF_00104">
    <property type="entry name" value="RNase_III"/>
    <property type="match status" value="1"/>
</dbReference>
<dbReference type="InterPro" id="IPR014720">
    <property type="entry name" value="dsRBD_dom"/>
</dbReference>
<dbReference type="InterPro" id="IPR011907">
    <property type="entry name" value="RNase_III"/>
</dbReference>
<dbReference type="InterPro" id="IPR000999">
    <property type="entry name" value="RNase_III_dom"/>
</dbReference>
<dbReference type="InterPro" id="IPR036389">
    <property type="entry name" value="RNase_III_sf"/>
</dbReference>
<dbReference type="NCBIfam" id="TIGR02191">
    <property type="entry name" value="RNaseIII"/>
    <property type="match status" value="1"/>
</dbReference>
<dbReference type="PANTHER" id="PTHR11207:SF0">
    <property type="entry name" value="RIBONUCLEASE 3"/>
    <property type="match status" value="1"/>
</dbReference>
<dbReference type="PANTHER" id="PTHR11207">
    <property type="entry name" value="RIBONUCLEASE III"/>
    <property type="match status" value="1"/>
</dbReference>
<dbReference type="Pfam" id="PF00035">
    <property type="entry name" value="dsrm"/>
    <property type="match status" value="1"/>
</dbReference>
<dbReference type="Pfam" id="PF14622">
    <property type="entry name" value="Ribonucleas_3_3"/>
    <property type="match status" value="1"/>
</dbReference>
<dbReference type="SMART" id="SM00358">
    <property type="entry name" value="DSRM"/>
    <property type="match status" value="1"/>
</dbReference>
<dbReference type="SMART" id="SM00535">
    <property type="entry name" value="RIBOc"/>
    <property type="match status" value="1"/>
</dbReference>
<dbReference type="SUPFAM" id="SSF54768">
    <property type="entry name" value="dsRNA-binding domain-like"/>
    <property type="match status" value="1"/>
</dbReference>
<dbReference type="SUPFAM" id="SSF69065">
    <property type="entry name" value="RNase III domain-like"/>
    <property type="match status" value="1"/>
</dbReference>
<dbReference type="PROSITE" id="PS50137">
    <property type="entry name" value="DS_RBD"/>
    <property type="match status" value="1"/>
</dbReference>
<dbReference type="PROSITE" id="PS00517">
    <property type="entry name" value="RNASE_3_1"/>
    <property type="match status" value="1"/>
</dbReference>
<dbReference type="PROSITE" id="PS50142">
    <property type="entry name" value="RNASE_3_2"/>
    <property type="match status" value="1"/>
</dbReference>
<sequence>MGIDVKELIRRNRQKHAEFEKKINYKFIDLRLLQKALIHSSYAFEQAQAGKNNERLEFVGDAVLDLVVGNALYRRFPEMREGELTRLRAALVNEGHLATMARKINLGYFLCLGKGEDNSKGREKSSILSCAYEAVIGAIFQDGGYDAVAALVERFFLPVIDRRKEDLLLADAKSRLQEILQEKHNEGPSYRLDNEEGPSHKKRFTISVLFRDEVLGTGEAGSKKEAEQRGAALAIKKIESM</sequence>
<proteinExistence type="inferred from homology"/>